<comment type="function">
    <text>Plant non-specific lipid-transfer proteins transfer phospholipids as well as galactolipids across membranes. May play a role in wax or cutin deposition in the cell walls of expanding epidermal cells and certain secretory tissues.</text>
</comment>
<comment type="similarity">
    <text evidence="2">Belongs to the plant LTP family.</text>
</comment>
<dbReference type="EMBL" id="AY793556">
    <property type="protein sequence ID" value="AAX35809.1"/>
    <property type="molecule type" value="mRNA"/>
</dbReference>
<dbReference type="SMR" id="A0AT31"/>
<dbReference type="Allergome" id="8712">
    <property type="allergen name" value="Len c 3"/>
</dbReference>
<dbReference type="GO" id="GO:0008289">
    <property type="term" value="F:lipid binding"/>
    <property type="evidence" value="ECO:0007669"/>
    <property type="project" value="UniProtKB-KW"/>
</dbReference>
<dbReference type="GO" id="GO:0006869">
    <property type="term" value="P:lipid transport"/>
    <property type="evidence" value="ECO:0007669"/>
    <property type="project" value="InterPro"/>
</dbReference>
<dbReference type="CDD" id="cd01960">
    <property type="entry name" value="nsLTP1"/>
    <property type="match status" value="1"/>
</dbReference>
<dbReference type="FunFam" id="1.10.110.10:FF:000002">
    <property type="entry name" value="Non-specific lipid-transfer protein"/>
    <property type="match status" value="1"/>
</dbReference>
<dbReference type="Gene3D" id="1.10.110.10">
    <property type="entry name" value="Plant lipid-transfer and hydrophobic proteins"/>
    <property type="match status" value="1"/>
</dbReference>
<dbReference type="InterPro" id="IPR036312">
    <property type="entry name" value="Bifun_inhib/LTP/seed_sf"/>
</dbReference>
<dbReference type="InterPro" id="IPR016140">
    <property type="entry name" value="Bifunc_inhib/LTP/seed_store"/>
</dbReference>
<dbReference type="InterPro" id="IPR000528">
    <property type="entry name" value="Plant_nsLTP"/>
</dbReference>
<dbReference type="PANTHER" id="PTHR33076">
    <property type="entry name" value="NON-SPECIFIC LIPID-TRANSFER PROTEIN 2-RELATED"/>
    <property type="match status" value="1"/>
</dbReference>
<dbReference type="Pfam" id="PF00234">
    <property type="entry name" value="Tryp_alpha_amyl"/>
    <property type="match status" value="1"/>
</dbReference>
<dbReference type="PRINTS" id="PR00382">
    <property type="entry name" value="LIPIDTRNSFER"/>
</dbReference>
<dbReference type="SMART" id="SM00499">
    <property type="entry name" value="AAI"/>
    <property type="match status" value="1"/>
</dbReference>
<dbReference type="SUPFAM" id="SSF47699">
    <property type="entry name" value="Bifunctional inhibitor/lipid-transfer protein/seed storage 2S albumin"/>
    <property type="match status" value="1"/>
</dbReference>
<dbReference type="PROSITE" id="PS00597">
    <property type="entry name" value="PLANT_LTP"/>
    <property type="match status" value="1"/>
</dbReference>
<keyword id="KW-1015">Disulfide bond</keyword>
<keyword id="KW-0446">Lipid-binding</keyword>
<keyword id="KW-0732">Signal</keyword>
<keyword id="KW-0813">Transport</keyword>
<evidence type="ECO:0000250" key="1">
    <source>
        <dbReference type="UniProtKB" id="P23096"/>
    </source>
</evidence>
<evidence type="ECO:0000255" key="2"/>
<feature type="signal peptide" evidence="2">
    <location>
        <begin position="1"/>
        <end position="24"/>
    </location>
</feature>
<feature type="chain" id="PRO_5000147976" description="Non-specific lipid-transfer protein 5">
    <location>
        <begin position="25"/>
        <end position="116"/>
    </location>
</feature>
<feature type="disulfide bond" evidence="1">
    <location>
        <begin position="28"/>
        <end position="75"/>
    </location>
</feature>
<feature type="disulfide bond" evidence="1">
    <location>
        <begin position="38"/>
        <end position="52"/>
    </location>
</feature>
<feature type="disulfide bond" evidence="1">
    <location>
        <begin position="53"/>
        <end position="98"/>
    </location>
</feature>
<feature type="disulfide bond" evidence="1">
    <location>
        <begin position="73"/>
        <end position="112"/>
    </location>
</feature>
<sequence length="116" mass="11686">MARSMKLACVVLVMCMIVAPMAEGAISCGAVTGDLSPCLTYLTGGPGPSPQCCGGVKKLLAAANTTPDRQAACNCMKSAASSITKLNTNNAAALPGKCGVNIPYKISTSTNCNTVK</sequence>
<accession>A0AT31</accession>
<organism>
    <name type="scientific">Lens culinaris</name>
    <name type="common">Lentil</name>
    <name type="synonym">Cicer lens</name>
    <dbReference type="NCBI Taxonomy" id="3864"/>
    <lineage>
        <taxon>Eukaryota</taxon>
        <taxon>Viridiplantae</taxon>
        <taxon>Streptophyta</taxon>
        <taxon>Embryophyta</taxon>
        <taxon>Tracheophyta</taxon>
        <taxon>Spermatophyta</taxon>
        <taxon>Magnoliopsida</taxon>
        <taxon>eudicotyledons</taxon>
        <taxon>Gunneridae</taxon>
        <taxon>Pentapetalae</taxon>
        <taxon>rosids</taxon>
        <taxon>fabids</taxon>
        <taxon>Fabales</taxon>
        <taxon>Fabaceae</taxon>
        <taxon>Papilionoideae</taxon>
        <taxon>50 kb inversion clade</taxon>
        <taxon>NPAAA clade</taxon>
        <taxon>Hologalegina</taxon>
        <taxon>IRL clade</taxon>
        <taxon>Fabeae</taxon>
        <taxon>Lens</taxon>
    </lineage>
</organism>
<protein>
    <recommendedName>
        <fullName>Non-specific lipid-transfer protein 5</fullName>
        <shortName>LTP5</shortName>
    </recommendedName>
</protein>
<name>NLTP5_LENCU</name>
<reference key="1">
    <citation type="journal article" date="2007" name="Biochemistry (Mosc.)">
        <title>Purification and primary structure of novel lipid transfer proteins from germinated lentil (Lens culinaris) seeds.</title>
        <authorList>
            <person name="Finkina E.I."/>
            <person name="Balandin S.V."/>
            <person name="Serebryakova M.V."/>
            <person name="Potapenko N.A."/>
            <person name="Tagaev A.A."/>
            <person name="Ovchinnikova T.V."/>
        </authorList>
    </citation>
    <scope>NUCLEOTIDE SEQUENCE [MRNA]</scope>
    <source>
        <tissue>Seedling</tissue>
    </source>
</reference>
<proteinExistence type="inferred from homology"/>